<sequence>MDNLSDTLKKLKITAVDRTDDSLEGCLDCLLQALTQNNMETSEKIQGSGILQVFASLLIPQSSCTAKVANVIAEIAKNEFMRIPCVDAGLISPLVQLLNSKDQEVLLQTGRALGNICYDSHEGRSAVDQAGGAQIVVDHLRSLCSKTDPASEKLLTVFCGMLMNYSNEKNDSLQAQLINMGVIPTLVKLLGIHCQKAALTEMCLVAFGNLAELESSKEQFASTNIAEELVKLFKKQIEHDKREMVFEVLAPLAENDAIKLQLVESGLVECLLEIVQQKVDSDKEEDIAELKTASDLMVLLLLGDESMQKLFEGGKGNVFQRVLSWIPSNNHQLQLAGALAIANFARNDGNCIHMVDNGIVEKLMDLLDRHVEDGNVTVQHAALSCLRNLAIPVVNKAKMLSAGVTEAVLKFLKSEMPPVQFKLLGTLRMLIDAQAEAAEQLGKNVKLVERLVEWCEAKDHAGVMGESNRLLSALIRHSKSKDVIKTIVQSGGIKHLVTMATSEHVIMQNEALVALALIAALELGTAEKDLESAQLVQILHRLLADERSAPEIKYNSMVLICALMGSESLHKEVQDLAFLDVVSKLRSHENKSVAQQASLTEQRLAVES</sequence>
<protein>
    <recommendedName>
        <fullName>Rap1 GTPase-GDP dissociation stimulator 1</fullName>
    </recommendedName>
    <alternativeName>
        <fullName>Exchange factor smgGDS</fullName>
    </alternativeName>
    <alternativeName>
        <fullName>SMG GDS protein</fullName>
    </alternativeName>
    <alternativeName>
        <fullName>SMG P21 stimulatory GDP/GTP exchange protein</fullName>
    </alternativeName>
</protein>
<comment type="function">
    <text evidence="1">Acts as a GEF (guanine nucleotide exchange factor) for the Rho family of small GTP-binding proteins (G proteins) that stimulates the dissociation of GDP to enable subsequent binding of GTP. Additionally, appears to chaperone the processing and/or trafficking of small GTPases containing a C-terminal polybasic region independently of GEF activity. Targets include RAP1A/RAP1B, RHOA, RHOB, RHOC, RAC1 and KRAS. Regulates mitochondrial dynamics by controlling RHOT function to promote mitochondrial fission during high calcium conditions. Able to promote the Ca(2+) release from the endoplasmic reticulum via both inositol trisphosphate (Ins3P) and ryanodine sensitive receptors leading to a enhanced mitochondrial Ca(2+) uptake.</text>
</comment>
<comment type="function">
    <molecule>Isoform 1</molecule>
    <text evidence="1">Acts as a GEF (guanine nucleotide exchange factor) for unprenylated RHOA. Chaperones the entry and passage of small GTPases through the prenylation pathway. Recognizes the last amino acid in the GTPase C-terminal CAAX motif with a preference for 'Leu' over 'Met', indicating involvement in the geranylgeranylation pathway. May also recognize prenylated GTPases.</text>
</comment>
<comment type="function">
    <molecule>Isoform 2</molecule>
    <text evidence="1">Acts as a GEF (guanine nucleotide exchange factor) for prenylated RHOA. Acts as a GEF for RHOC. Chaperones the downstream trafficking and/or processing of small newly prenylated GTPases. Escorts RAC1 to the nucleus.</text>
</comment>
<comment type="subunit">
    <text evidence="1">Interacts with RABL3. Interacts with RHOT1.</text>
</comment>
<comment type="subunit">
    <molecule>Isoform 1</molecule>
    <text evidence="1">Interacts with unprenylated RHOA; the interaction is direct. Interacts with RAP1A. Interacts with KRAS. Interacts with RAC1. Interacts with RAP1B. Preferentially interacts with unprenylated GTPases that will become geranylgeranylated. May also interact with prenylated GTPases.</text>
</comment>
<comment type="subunit">
    <molecule>Isoform 2</molecule>
    <text evidence="1">Interacts with prenylated RHOA; the interaction is direct and in a 1:1 stoichiometry. Interacts with RAP1A. Interacts with KRAS. Interacts with RAC1. Interacts with RAP1B. Preferentially interacts with prenylated GTPases.</text>
</comment>
<comment type="subcellular location">
    <subcellularLocation>
        <location evidence="1">Cytoplasm</location>
        <location evidence="1">Cytosol</location>
    </subcellularLocation>
    <subcellularLocation>
        <location evidence="1">Endoplasmic reticulum</location>
    </subcellularLocation>
    <subcellularLocation>
        <location evidence="1">Mitochondrion</location>
    </subcellularLocation>
    <subcellularLocation>
        <location evidence="1">Nucleus</location>
    </subcellularLocation>
    <text evidence="1">Nuclear import is dependent on complexing with a GTPase containing a C-terminal polybasic region.</text>
</comment>
<comment type="alternative products">
    <event type="alternative splicing"/>
    <isoform>
        <id>Q04173-1</id>
        <name>1</name>
        <sequence type="displayed"/>
    </isoform>
    <isoform>
        <id>Q04173-2</id>
        <name>2</name>
        <sequence type="described" ref="VSP_061496"/>
    </isoform>
</comment>
<comment type="tissue specificity">
    <text evidence="4">Brain.</text>
</comment>
<comment type="PTM">
    <text evidence="4">The N-terminus is blocked.</text>
</comment>
<comment type="PTM">
    <text evidence="1">Forms covalent cross-links mediated by transglutaminase TGM2, between a glutamine and the epsilon-amino group of a lysine residue, forming homopolymers and heteropolymers.</text>
</comment>
<reference key="1">
    <citation type="journal article" date="1991" name="Mol. Cell. Biol.">
        <title>Molecular cloning of the cDNA for stimulatory GDP/GTP exchange protein for smg p21s (ras p21-like small GTP-binding proteins) and characterization of stimulatory GDP/GTP exchange protein.</title>
        <authorList>
            <person name="Kaibuchi K."/>
            <person name="Mizuno T."/>
            <person name="Fujioka H."/>
            <person name="Yamamoto T."/>
            <person name="Kishi K."/>
            <person name="Fukumoto Y."/>
            <person name="Hori Y."/>
            <person name="Takai Y."/>
        </authorList>
    </citation>
    <scope>NUCLEOTIDE SEQUENCE [MRNA] (ISOFORM 2)</scope>
    <scope>PARTIAL PROTEIN SEQUENCE</scope>
    <source>
        <tissue>Brain</tissue>
    </source>
</reference>
<reference key="2">
    <citation type="journal article" date="1992" name="Kobe J. Med. Sci.">
        <title>The stimulatory GDP/GTP exchange protein for ras p21-related small GTP-binding proteins.</title>
        <authorList>
            <person name="Yamamoto T."/>
        </authorList>
    </citation>
    <scope>NUCLEOTIDE SEQUENCE [MRNA] (ISOFORM 2)</scope>
    <source>
        <tissue>Brain</tissue>
    </source>
</reference>
<reference evidence="7" key="3">
    <citation type="submission" date="2018-03" db="EMBL/GenBank/DDBJ databases">
        <title>ARS-UCD1.2.</title>
        <authorList>
            <person name="Rosen B.D."/>
            <person name="Bickhart D.M."/>
            <person name="Koren S."/>
            <person name="Schnabel R.D."/>
            <person name="Hall R."/>
            <person name="Zimin A."/>
            <person name="Dreischer C."/>
            <person name="Schultheiss S."/>
            <person name="Schroeder S.G."/>
            <person name="Elsik C.G."/>
            <person name="Couldrey C."/>
            <person name="Liu G.E."/>
            <person name="Van Tassell C.P."/>
            <person name="Phillippy A.M."/>
            <person name="Smith T.P.L."/>
            <person name="Medrano J.F."/>
        </authorList>
    </citation>
    <scope>NUCLEOTIDE SEQUENCE [LARGE SCALE GENOMIC DNA]</scope>
    <scope>VARIANTS ASN-196 AND ALA-385</scope>
    <source>
        <strain evidence="7">Hereford</strain>
    </source>
</reference>
<reference key="4">
    <citation type="journal article" date="1990" name="J. Biol. Chem.">
        <title>Purification and characterization from bovine brain cytosol of proteins that regulate the GDP/GTP exchange reaction of smg p21s, ras p21-like GTP-binding proteins.</title>
        <authorList>
            <person name="Yamamoto T."/>
            <person name="Kaibuchi K."/>
            <person name="Mizuno T."/>
            <person name="Hiroyoshi M."/>
            <person name="Shirataki H."/>
            <person name="Takai Y."/>
        </authorList>
    </citation>
    <scope>PROTEIN SEQUENCE OF 400-406</scope>
    <source>
        <tissue>Brain</tissue>
    </source>
</reference>
<accession>Q04173</accession>
<accession>A0A3Q1M477</accession>
<accession>Q9TS36</accession>
<keyword id="KW-0007">Acetylation</keyword>
<keyword id="KW-0025">Alternative splicing</keyword>
<keyword id="KW-0963">Cytoplasm</keyword>
<keyword id="KW-0903">Direct protein sequencing</keyword>
<keyword id="KW-0256">Endoplasmic reticulum</keyword>
<keyword id="KW-0344">Guanine-nucleotide releasing factor</keyword>
<keyword id="KW-0496">Mitochondrion</keyword>
<keyword id="KW-0539">Nucleus</keyword>
<keyword id="KW-1185">Reference proteome</keyword>
<keyword id="KW-0677">Repeat</keyword>
<name>GDS1_BOVIN</name>
<organism>
    <name type="scientific">Bos taurus</name>
    <name type="common">Bovine</name>
    <dbReference type="NCBI Taxonomy" id="9913"/>
    <lineage>
        <taxon>Eukaryota</taxon>
        <taxon>Metazoa</taxon>
        <taxon>Chordata</taxon>
        <taxon>Craniata</taxon>
        <taxon>Vertebrata</taxon>
        <taxon>Euteleostomi</taxon>
        <taxon>Mammalia</taxon>
        <taxon>Eutheria</taxon>
        <taxon>Laurasiatheria</taxon>
        <taxon>Artiodactyla</taxon>
        <taxon>Ruminantia</taxon>
        <taxon>Pecora</taxon>
        <taxon>Bovidae</taxon>
        <taxon>Bovinae</taxon>
        <taxon>Bos</taxon>
    </lineage>
</organism>
<proteinExistence type="evidence at protein level"/>
<gene>
    <name type="primary">RAP1GDS1</name>
</gene>
<feature type="chain" id="PRO_0000056758" description="Rap1 GTPase-GDP dissociation stimulator 1">
    <location>
        <begin position="1"/>
        <end position="608"/>
    </location>
</feature>
<feature type="repeat" description="ARM 1" evidence="3">
    <location>
        <begin position="89"/>
        <end position="131"/>
    </location>
</feature>
<feature type="repeat" description="ARM 2" evidence="2">
    <location>
        <begin position="171"/>
        <end position="212"/>
    </location>
</feature>
<feature type="repeat" description="ARM 3" evidence="2">
    <location>
        <begin position="348"/>
        <end position="391"/>
    </location>
</feature>
<feature type="repeat" description="ARM 4" evidence="1">
    <location>
        <begin position="392"/>
        <end position="432"/>
    </location>
</feature>
<feature type="repeat" description="ARM 5" evidence="1">
    <location>
        <begin position="480"/>
        <end position="520"/>
    </location>
</feature>
<feature type="region of interest" description="Prevents binding to prenylated RHOA" evidence="1">
    <location>
        <begin position="122"/>
        <end position="171"/>
    </location>
</feature>
<feature type="modified residue" description="N6-acetyllysine" evidence="1">
    <location>
        <position position="231"/>
    </location>
</feature>
<feature type="splice variant" id="VSP_061496" description="In isoform 2." evidence="4">
    <location>
        <begin position="122"/>
        <end position="170"/>
    </location>
</feature>
<feature type="sequence variant" evidence="5">
    <original>K</original>
    <variation>N</variation>
    <location>
        <position position="196"/>
    </location>
</feature>
<feature type="sequence variant" evidence="5">
    <original>C</original>
    <variation>A</variation>
    <location>
        <position position="385"/>
    </location>
</feature>
<feature type="sequence conflict" description="In Ref. 2; no nucleotide entry." evidence="6" ref="2">
    <original>EGGKGNVFQRVLSWIPSNNHQLQLAGALAIANFARNDGNCIHMVDNGIVEKLMDLLDRHVEDGN</original>
    <variation>VTVQHAALSCLRNLAIPVVNKAKMLSAGVTEAVLKFLKSEMPPVQFKLLGTLRMLIDAQMQKLF</variation>
    <location>
        <begin position="312"/>
        <end position="375"/>
    </location>
</feature>
<feature type="sequence conflict" description="In Ref. 2; no nucleotide entry." evidence="6" ref="2">
    <original>AAEQLGKNVKLVERLVEWCEAKDHAGVMGESNRLLSALIRHSKSKDVIKTIVQSGGIKHLVTMA</original>
    <variation>TSEHVIMQNEALVALALIAALELGTAEKDLESAQLVQILHRLLADERSAPEIKYNSMVLICAAE</variation>
    <location>
        <begin position="437"/>
        <end position="500"/>
    </location>
</feature>
<dbReference type="EMBL" id="M63325">
    <property type="status" value="NOT_ANNOTATED_CDS"/>
    <property type="molecule type" value="mRNA"/>
</dbReference>
<dbReference type="PIR" id="A39795">
    <property type="entry name" value="A39795"/>
</dbReference>
<dbReference type="SMR" id="Q04173"/>
<dbReference type="FunCoup" id="Q04173">
    <property type="interactions" value="134"/>
</dbReference>
<dbReference type="STRING" id="9913.ENSBTAP00000064604"/>
<dbReference type="PaxDb" id="9913-ENSBTAP00000009904"/>
<dbReference type="PeptideAtlas" id="Q04173"/>
<dbReference type="VEuPathDB" id="HostDB:ENSBTAG00000007522"/>
<dbReference type="eggNOG" id="KOG4500">
    <property type="taxonomic scope" value="Eukaryota"/>
</dbReference>
<dbReference type="InParanoid" id="Q04173"/>
<dbReference type="Proteomes" id="UP000009136">
    <property type="component" value="Chromosome 6"/>
</dbReference>
<dbReference type="Bgee" id="ENSBTAG00000007522">
    <property type="expression patterns" value="Expressed in myometrium and 107 other cell types or tissues"/>
</dbReference>
<dbReference type="GO" id="GO:0005829">
    <property type="term" value="C:cytosol"/>
    <property type="evidence" value="ECO:0000318"/>
    <property type="project" value="GO_Central"/>
</dbReference>
<dbReference type="GO" id="GO:0005783">
    <property type="term" value="C:endoplasmic reticulum"/>
    <property type="evidence" value="ECO:0007669"/>
    <property type="project" value="UniProtKB-SubCell"/>
</dbReference>
<dbReference type="GO" id="GO:0005739">
    <property type="term" value="C:mitochondrion"/>
    <property type="evidence" value="ECO:0007669"/>
    <property type="project" value="UniProtKB-SubCell"/>
</dbReference>
<dbReference type="GO" id="GO:0005634">
    <property type="term" value="C:nucleus"/>
    <property type="evidence" value="ECO:0000250"/>
    <property type="project" value="UniProtKB"/>
</dbReference>
<dbReference type="GO" id="GO:0005085">
    <property type="term" value="F:guanyl-nucleotide exchange factor activity"/>
    <property type="evidence" value="ECO:0000250"/>
    <property type="project" value="UniProtKB"/>
</dbReference>
<dbReference type="GO" id="GO:0080120">
    <property type="term" value="P:CAAX-box protein maturation"/>
    <property type="evidence" value="ECO:0000250"/>
    <property type="project" value="UniProtKB"/>
</dbReference>
<dbReference type="GO" id="GO:0034504">
    <property type="term" value="P:protein localization to nucleus"/>
    <property type="evidence" value="ECO:0000250"/>
    <property type="project" value="UniProtKB"/>
</dbReference>
<dbReference type="FunFam" id="1.25.10.10:FF:000127">
    <property type="entry name" value="rap1 GTPase-GDP dissociation stimulator 1 isoform X1"/>
    <property type="match status" value="1"/>
</dbReference>
<dbReference type="FunFam" id="1.25.10.10:FF:000141">
    <property type="entry name" value="rap1 GTPase-GDP dissociation stimulator 1 isoform X1"/>
    <property type="match status" value="1"/>
</dbReference>
<dbReference type="FunFam" id="1.25.10.10:FF:000144">
    <property type="entry name" value="rap1 GTPase-GDP dissociation stimulator 1 isoform X1"/>
    <property type="match status" value="1"/>
</dbReference>
<dbReference type="Gene3D" id="1.25.10.10">
    <property type="entry name" value="Leucine-rich Repeat Variant"/>
    <property type="match status" value="3"/>
</dbReference>
<dbReference type="InterPro" id="IPR011989">
    <property type="entry name" value="ARM-like"/>
</dbReference>
<dbReference type="InterPro" id="IPR016024">
    <property type="entry name" value="ARM-type_fold"/>
</dbReference>
<dbReference type="InterPro" id="IPR000225">
    <property type="entry name" value="Armadillo"/>
</dbReference>
<dbReference type="InterPro" id="IPR040144">
    <property type="entry name" value="RAP1GDS1"/>
</dbReference>
<dbReference type="PANTHER" id="PTHR10957">
    <property type="entry name" value="RAP1 GTPASE-GDP DISSOCIATION STIMULATOR 1"/>
    <property type="match status" value="1"/>
</dbReference>
<dbReference type="Pfam" id="PF00514">
    <property type="entry name" value="Arm"/>
    <property type="match status" value="3"/>
</dbReference>
<dbReference type="SMART" id="SM00185">
    <property type="entry name" value="ARM"/>
    <property type="match status" value="6"/>
</dbReference>
<dbReference type="SUPFAM" id="SSF48371">
    <property type="entry name" value="ARM repeat"/>
    <property type="match status" value="2"/>
</dbReference>
<dbReference type="PROSITE" id="PS50176">
    <property type="entry name" value="ARM_REPEAT"/>
    <property type="match status" value="2"/>
</dbReference>
<evidence type="ECO:0000250" key="1">
    <source>
        <dbReference type="UniProtKB" id="P52306"/>
    </source>
</evidence>
<evidence type="ECO:0000255" key="2"/>
<evidence type="ECO:0000255" key="3">
    <source>
        <dbReference type="PROSITE-ProRule" id="PRU00259"/>
    </source>
</evidence>
<evidence type="ECO:0000269" key="4">
    <source>
    </source>
</evidence>
<evidence type="ECO:0000269" key="5">
    <source ref="3"/>
</evidence>
<evidence type="ECO:0000305" key="6"/>
<evidence type="ECO:0000312" key="7">
    <source>
        <dbReference type="Proteomes" id="UP000009136"/>
    </source>
</evidence>